<dbReference type="EMBL" id="CP000468">
    <property type="protein sequence ID" value="ABJ03109.1"/>
    <property type="status" value="ALT_INIT"/>
    <property type="molecule type" value="Genomic_DNA"/>
</dbReference>
<dbReference type="SMR" id="A1AHG9"/>
<dbReference type="KEGG" id="ecv:APECO1_2823"/>
<dbReference type="HOGENOM" id="CLU_073529_0_2_6"/>
<dbReference type="Proteomes" id="UP000008216">
    <property type="component" value="Chromosome"/>
</dbReference>
<dbReference type="GO" id="GO:0046872">
    <property type="term" value="F:metal ion binding"/>
    <property type="evidence" value="ECO:0007669"/>
    <property type="project" value="UniProtKB-KW"/>
</dbReference>
<dbReference type="GO" id="GO:0008237">
    <property type="term" value="F:metallopeptidase activity"/>
    <property type="evidence" value="ECO:0007669"/>
    <property type="project" value="UniProtKB-KW"/>
</dbReference>
<dbReference type="GO" id="GO:0006508">
    <property type="term" value="P:proteolysis"/>
    <property type="evidence" value="ECO:0007669"/>
    <property type="project" value="UniProtKB-KW"/>
</dbReference>
<dbReference type="CDD" id="cd08071">
    <property type="entry name" value="MPN_DUF2466"/>
    <property type="match status" value="1"/>
</dbReference>
<dbReference type="Gene3D" id="3.40.140.10">
    <property type="entry name" value="Cytidine Deaminase, domain 2"/>
    <property type="match status" value="1"/>
</dbReference>
<dbReference type="HAMAP" id="MF_00018">
    <property type="entry name" value="UPF0758_YicR"/>
    <property type="match status" value="1"/>
</dbReference>
<dbReference type="InterPro" id="IPR037518">
    <property type="entry name" value="MPN"/>
</dbReference>
<dbReference type="InterPro" id="IPR025657">
    <property type="entry name" value="RadC_JAB"/>
</dbReference>
<dbReference type="InterPro" id="IPR010994">
    <property type="entry name" value="RuvA_2-like"/>
</dbReference>
<dbReference type="InterPro" id="IPR001405">
    <property type="entry name" value="UPF0758"/>
</dbReference>
<dbReference type="InterPro" id="IPR020891">
    <property type="entry name" value="UPF0758_CS"/>
</dbReference>
<dbReference type="InterPro" id="IPR046778">
    <property type="entry name" value="UPF0758_N"/>
</dbReference>
<dbReference type="InterPro" id="IPR022820">
    <property type="entry name" value="UPF0758_YicR"/>
</dbReference>
<dbReference type="NCBIfam" id="NF000642">
    <property type="entry name" value="PRK00024.1"/>
    <property type="match status" value="1"/>
</dbReference>
<dbReference type="NCBIfam" id="TIGR00608">
    <property type="entry name" value="radc"/>
    <property type="match status" value="1"/>
</dbReference>
<dbReference type="PANTHER" id="PTHR30471">
    <property type="entry name" value="DNA REPAIR PROTEIN RADC"/>
    <property type="match status" value="1"/>
</dbReference>
<dbReference type="PANTHER" id="PTHR30471:SF3">
    <property type="entry name" value="UPF0758 PROTEIN YEES-RELATED"/>
    <property type="match status" value="1"/>
</dbReference>
<dbReference type="Pfam" id="PF04002">
    <property type="entry name" value="RadC"/>
    <property type="match status" value="1"/>
</dbReference>
<dbReference type="Pfam" id="PF20582">
    <property type="entry name" value="UPF0758_N"/>
    <property type="match status" value="1"/>
</dbReference>
<dbReference type="SUPFAM" id="SSF47781">
    <property type="entry name" value="RuvA domain 2-like"/>
    <property type="match status" value="1"/>
</dbReference>
<dbReference type="PROSITE" id="PS50249">
    <property type="entry name" value="MPN"/>
    <property type="match status" value="1"/>
</dbReference>
<dbReference type="PROSITE" id="PS01302">
    <property type="entry name" value="UPF0758"/>
    <property type="match status" value="1"/>
</dbReference>
<organism>
    <name type="scientific">Escherichia coli O1:K1 / APEC</name>
    <dbReference type="NCBI Taxonomy" id="405955"/>
    <lineage>
        <taxon>Bacteria</taxon>
        <taxon>Pseudomonadati</taxon>
        <taxon>Pseudomonadota</taxon>
        <taxon>Gammaproteobacteria</taxon>
        <taxon>Enterobacterales</taxon>
        <taxon>Enterobacteriaceae</taxon>
        <taxon>Escherichia</taxon>
    </lineage>
</organism>
<reference key="1">
    <citation type="journal article" date="2007" name="J. Bacteriol.">
        <title>The genome sequence of avian pathogenic Escherichia coli strain O1:K1:H7 shares strong similarities with human extraintestinal pathogenic E. coli genomes.</title>
        <authorList>
            <person name="Johnson T.J."/>
            <person name="Kariyawasam S."/>
            <person name="Wannemuehler Y."/>
            <person name="Mangiamele P."/>
            <person name="Johnson S.J."/>
            <person name="Doetkott C."/>
            <person name="Skyberg J.A."/>
            <person name="Lynne A.M."/>
            <person name="Johnson J.R."/>
            <person name="Nolan L.K."/>
        </authorList>
    </citation>
    <scope>NUCLEOTIDE SEQUENCE [LARGE SCALE GENOMIC DNA]</scope>
</reference>
<keyword id="KW-0378">Hydrolase</keyword>
<keyword id="KW-0479">Metal-binding</keyword>
<keyword id="KW-0482">Metalloprotease</keyword>
<keyword id="KW-0645">Protease</keyword>
<keyword id="KW-1185">Reference proteome</keyword>
<keyword id="KW-0862">Zinc</keyword>
<comment type="similarity">
    <text evidence="1">Belongs to the UPF0758 family. YicR subfamily.</text>
</comment>
<comment type="sequence caution" evidence="3">
    <conflict type="erroneous initiation">
        <sequence resource="EMBL-CDS" id="ABJ03109"/>
    </conflict>
</comment>
<name>YICR_ECOK1</name>
<protein>
    <recommendedName>
        <fullName evidence="1">UPF0758 protein YicR</fullName>
    </recommendedName>
</protein>
<gene>
    <name evidence="1" type="primary">yicR</name>
    <name type="ordered locus">Ecok1_36150</name>
    <name type="ORF">APECO1_2823</name>
</gene>
<feature type="chain" id="PRO_0000322688" description="UPF0758 protein YicR">
    <location>
        <begin position="1"/>
        <end position="222"/>
    </location>
</feature>
<feature type="domain" description="MPN" evidence="2">
    <location>
        <begin position="100"/>
        <end position="222"/>
    </location>
</feature>
<feature type="short sequence motif" description="JAMM motif" evidence="2">
    <location>
        <begin position="171"/>
        <end position="184"/>
    </location>
</feature>
<feature type="binding site" evidence="2">
    <location>
        <position position="171"/>
    </location>
    <ligand>
        <name>Zn(2+)</name>
        <dbReference type="ChEBI" id="CHEBI:29105"/>
        <note>catalytic</note>
    </ligand>
</feature>
<feature type="binding site" evidence="2">
    <location>
        <position position="173"/>
    </location>
    <ligand>
        <name>Zn(2+)</name>
        <dbReference type="ChEBI" id="CHEBI:29105"/>
        <note>catalytic</note>
    </ligand>
</feature>
<feature type="binding site" evidence="2">
    <location>
        <position position="184"/>
    </location>
    <ligand>
        <name>Zn(2+)</name>
        <dbReference type="ChEBI" id="CHEBI:29105"/>
        <note>catalytic</note>
    </ligand>
</feature>
<evidence type="ECO:0000255" key="1">
    <source>
        <dbReference type="HAMAP-Rule" id="MF_00018"/>
    </source>
</evidence>
<evidence type="ECO:0000255" key="2">
    <source>
        <dbReference type="PROSITE-ProRule" id="PRU01182"/>
    </source>
</evidence>
<evidence type="ECO:0000305" key="3"/>
<proteinExistence type="inferred from homology"/>
<sequence length="222" mass="25258">MKNNAQLLMPREKMLKFGISALTDVELLALFLRTGTRGKDVLTLAKEMLENFGSLYGLLTSEYEQFSGVHGIGVAKFAQLKGIAELARRYYNVRMREESPLLSPEMTREFLQSQLTGEEREIFMVIFLDSQHRVITHSRLFSGTLNHVEVHPREIIREAIKINASALILAHNHPSGCAEPSKADKLITERIIKSCQFMDLRVLDHIVIGRGEYVSFAERGWI</sequence>
<accession>A1AHG9</accession>